<evidence type="ECO:0000250" key="1"/>
<evidence type="ECO:0000250" key="2">
    <source>
        <dbReference type="UniProtKB" id="P48549"/>
    </source>
</evidence>
<evidence type="ECO:0000250" key="3">
    <source>
        <dbReference type="UniProtKB" id="P63250"/>
    </source>
</evidence>
<evidence type="ECO:0000255" key="4"/>
<evidence type="ECO:0000256" key="5">
    <source>
        <dbReference type="SAM" id="MobiDB-lite"/>
    </source>
</evidence>
<evidence type="ECO:0000269" key="6">
    <source>
    </source>
</evidence>
<evidence type="ECO:0000269" key="7">
    <source>
    </source>
</evidence>
<evidence type="ECO:0000269" key="8">
    <source>
    </source>
</evidence>
<evidence type="ECO:0000269" key="9">
    <source>
    </source>
</evidence>
<evidence type="ECO:0000303" key="10">
    <source>
    </source>
</evidence>
<evidence type="ECO:0000305" key="11"/>
<evidence type="ECO:0007829" key="12">
    <source>
        <dbReference type="PDB" id="1N9P"/>
    </source>
</evidence>
<protein>
    <recommendedName>
        <fullName>G protein-activated inward rectifier potassium channel 1</fullName>
        <shortName>GIRK-1</shortName>
    </recommendedName>
    <alternativeName>
        <fullName>Inward rectifier K(+) channel Kir3.1</fullName>
    </alternativeName>
    <alternativeName>
        <fullName>KGA</fullName>
    </alternativeName>
    <alternativeName>
        <fullName>KGB1</fullName>
    </alternativeName>
    <alternativeName>
        <fullName>Potassium channel, inwardly rectifying subfamily J member 3</fullName>
    </alternativeName>
</protein>
<proteinExistence type="evidence at protein level"/>
<dbReference type="EMBL" id="L25264">
    <property type="protein sequence ID" value="AAA41226.1"/>
    <property type="molecule type" value="mRNA"/>
</dbReference>
<dbReference type="EMBL" id="U01071">
    <property type="protein sequence ID" value="AAC52127.1"/>
    <property type="molecule type" value="mRNA"/>
</dbReference>
<dbReference type="EMBL" id="U01141">
    <property type="protein sequence ID" value="AAC52125.1"/>
    <property type="molecule type" value="mRNA"/>
</dbReference>
<dbReference type="EMBL" id="Y12259">
    <property type="protein sequence ID" value="CAA72936.1"/>
    <property type="molecule type" value="mRNA"/>
</dbReference>
<dbReference type="EMBL" id="U09243">
    <property type="protein sequence ID" value="AAA18031.1"/>
    <property type="molecule type" value="mRNA"/>
</dbReference>
<dbReference type="PIR" id="I61084">
    <property type="entry name" value="I61084"/>
</dbReference>
<dbReference type="RefSeq" id="NP_113798.1">
    <property type="nucleotide sequence ID" value="NM_031610.3"/>
</dbReference>
<dbReference type="PDB" id="1N9P">
    <property type="method" value="X-ray"/>
    <property type="resolution" value="1.80 A"/>
    <property type="chains" value="A=41-63, A=190-371"/>
</dbReference>
<dbReference type="PDBsum" id="1N9P"/>
<dbReference type="SMR" id="P63251"/>
<dbReference type="ComplexPortal" id="CPX-3276">
    <property type="entry name" value="I(KACh) inward rectifier potassium channel complex"/>
</dbReference>
<dbReference type="FunCoup" id="P63251">
    <property type="interactions" value="1067"/>
</dbReference>
<dbReference type="IntAct" id="P63251">
    <property type="interactions" value="1"/>
</dbReference>
<dbReference type="MINT" id="P63251"/>
<dbReference type="STRING" id="10116.ENSRNOP00000007335"/>
<dbReference type="BindingDB" id="P63251"/>
<dbReference type="ChEMBL" id="CHEMBL3832643"/>
<dbReference type="GuidetoPHARMACOLOGY" id="434"/>
<dbReference type="GlyCosmos" id="P63251">
    <property type="glycosylation" value="1 site, No reported glycans"/>
</dbReference>
<dbReference type="GlyGen" id="P63251">
    <property type="glycosylation" value="1 site"/>
</dbReference>
<dbReference type="iPTMnet" id="P63251"/>
<dbReference type="PhosphoSitePlus" id="P63251"/>
<dbReference type="PaxDb" id="10116-ENSRNOP00000007335"/>
<dbReference type="Ensembl" id="ENSRNOT00000116585.1">
    <property type="protein sequence ID" value="ENSRNOP00000082842.1"/>
    <property type="gene ID" value="ENSRNOG00000005369.6"/>
</dbReference>
<dbReference type="GeneID" id="50599"/>
<dbReference type="KEGG" id="rno:50599"/>
<dbReference type="UCSC" id="RGD:2958">
    <property type="organism name" value="rat"/>
</dbReference>
<dbReference type="AGR" id="RGD:2958"/>
<dbReference type="CTD" id="3760"/>
<dbReference type="RGD" id="2958">
    <property type="gene designation" value="Kcnj3"/>
</dbReference>
<dbReference type="eggNOG" id="KOG3827">
    <property type="taxonomic scope" value="Eukaryota"/>
</dbReference>
<dbReference type="GeneTree" id="ENSGT01080000257365"/>
<dbReference type="HOGENOM" id="CLU_022738_13_0_1"/>
<dbReference type="InParanoid" id="P63251"/>
<dbReference type="OMA" id="ITNSKDR"/>
<dbReference type="OrthoDB" id="273257at2759"/>
<dbReference type="PhylomeDB" id="P63251"/>
<dbReference type="TreeFam" id="TF313676"/>
<dbReference type="Reactome" id="R-RNO-1296041">
    <property type="pathway name" value="Activation of G protein gated Potassium channels"/>
</dbReference>
<dbReference type="Reactome" id="R-RNO-997272">
    <property type="pathway name" value="Inhibition of voltage gated Ca2+ channels via Gbeta/gamma subunits"/>
</dbReference>
<dbReference type="PRO" id="PR:P63251"/>
<dbReference type="Proteomes" id="UP000002494">
    <property type="component" value="Chromosome 3"/>
</dbReference>
<dbReference type="Bgee" id="ENSRNOG00000005369">
    <property type="expression patterns" value="Expressed in frontal cortex and 11 other cell types or tissues"/>
</dbReference>
<dbReference type="GO" id="GO:0009986">
    <property type="term" value="C:cell surface"/>
    <property type="evidence" value="ECO:0000314"/>
    <property type="project" value="RGD"/>
</dbReference>
<dbReference type="GO" id="GO:0009897">
    <property type="term" value="C:external side of plasma membrane"/>
    <property type="evidence" value="ECO:0000314"/>
    <property type="project" value="RGD"/>
</dbReference>
<dbReference type="GO" id="GO:1990566">
    <property type="term" value="C:I(KACh) inward rectifier potassium channel complex"/>
    <property type="evidence" value="ECO:0000266"/>
    <property type="project" value="ComplexPortal"/>
</dbReference>
<dbReference type="GO" id="GO:0098688">
    <property type="term" value="C:parallel fiber to Purkinje cell synapse"/>
    <property type="evidence" value="ECO:0000266"/>
    <property type="project" value="RGD"/>
</dbReference>
<dbReference type="GO" id="GO:0005886">
    <property type="term" value="C:plasma membrane"/>
    <property type="evidence" value="ECO:0000318"/>
    <property type="project" value="GO_Central"/>
</dbReference>
<dbReference type="GO" id="GO:0042734">
    <property type="term" value="C:presynaptic membrane"/>
    <property type="evidence" value="ECO:0000266"/>
    <property type="project" value="RGD"/>
</dbReference>
<dbReference type="GO" id="GO:0030315">
    <property type="term" value="C:T-tubule"/>
    <property type="evidence" value="ECO:0000314"/>
    <property type="project" value="RGD"/>
</dbReference>
<dbReference type="GO" id="GO:0008076">
    <property type="term" value="C:voltage-gated potassium channel complex"/>
    <property type="evidence" value="ECO:0000266"/>
    <property type="project" value="RGD"/>
</dbReference>
<dbReference type="GO" id="GO:0015467">
    <property type="term" value="F:G-protein activated inward rectifier potassium channel activity"/>
    <property type="evidence" value="ECO:0000314"/>
    <property type="project" value="UniProtKB"/>
</dbReference>
<dbReference type="GO" id="GO:0005546">
    <property type="term" value="F:phosphatidylinositol-4,5-bisphosphate binding"/>
    <property type="evidence" value="ECO:0000314"/>
    <property type="project" value="UniProtKB"/>
</dbReference>
<dbReference type="GO" id="GO:0099508">
    <property type="term" value="F:voltage-gated monoatomic ion channel activity involved in regulation of presynaptic membrane potential"/>
    <property type="evidence" value="ECO:0000314"/>
    <property type="project" value="SynGO"/>
</dbReference>
<dbReference type="GO" id="GO:1990573">
    <property type="term" value="P:potassium ion import across plasma membrane"/>
    <property type="evidence" value="ECO:0000266"/>
    <property type="project" value="RGD"/>
</dbReference>
<dbReference type="GO" id="GO:0071805">
    <property type="term" value="P:potassium ion transmembrane transport"/>
    <property type="evidence" value="ECO:0000303"/>
    <property type="project" value="ComplexPortal"/>
</dbReference>
<dbReference type="GO" id="GO:0034765">
    <property type="term" value="P:regulation of monoatomic ion transmembrane transport"/>
    <property type="evidence" value="ECO:0000318"/>
    <property type="project" value="GO_Central"/>
</dbReference>
<dbReference type="GO" id="GO:0051602">
    <property type="term" value="P:response to electrical stimulus"/>
    <property type="evidence" value="ECO:0000270"/>
    <property type="project" value="RGD"/>
</dbReference>
<dbReference type="FunFam" id="1.10.287.70:FF:000019">
    <property type="entry name" value="G protein-activated inward rectifier potassium channel 1"/>
    <property type="match status" value="1"/>
</dbReference>
<dbReference type="FunFam" id="2.60.40.1400:FF:000006">
    <property type="entry name" value="G protein-activated inward rectifier potassium channel 1"/>
    <property type="match status" value="1"/>
</dbReference>
<dbReference type="Gene3D" id="1.10.287.70">
    <property type="match status" value="1"/>
</dbReference>
<dbReference type="Gene3D" id="2.60.40.1400">
    <property type="entry name" value="G protein-activated inward rectifier potassium channel 1"/>
    <property type="match status" value="1"/>
</dbReference>
<dbReference type="InterPro" id="IPR014756">
    <property type="entry name" value="Ig_E-set"/>
</dbReference>
<dbReference type="InterPro" id="IPR041647">
    <property type="entry name" value="IRK_C"/>
</dbReference>
<dbReference type="InterPro" id="IPR016449">
    <property type="entry name" value="K_chnl_inward-rec_Kir"/>
</dbReference>
<dbReference type="InterPro" id="IPR003274">
    <property type="entry name" value="K_chnl_inward-rec_Kir3.1"/>
</dbReference>
<dbReference type="InterPro" id="IPR013518">
    <property type="entry name" value="K_chnl_inward-rec_Kir_cyto"/>
</dbReference>
<dbReference type="InterPro" id="IPR040445">
    <property type="entry name" value="Kir_TM"/>
</dbReference>
<dbReference type="PANTHER" id="PTHR11767:SF16">
    <property type="entry name" value="G PROTEIN-ACTIVATED INWARD RECTIFIER POTASSIUM CHANNEL 1"/>
    <property type="match status" value="1"/>
</dbReference>
<dbReference type="PANTHER" id="PTHR11767">
    <property type="entry name" value="INWARD RECTIFIER POTASSIUM CHANNEL"/>
    <property type="match status" value="1"/>
</dbReference>
<dbReference type="Pfam" id="PF01007">
    <property type="entry name" value="IRK"/>
    <property type="match status" value="1"/>
</dbReference>
<dbReference type="Pfam" id="PF17655">
    <property type="entry name" value="IRK_C"/>
    <property type="match status" value="1"/>
</dbReference>
<dbReference type="PRINTS" id="PR01327">
    <property type="entry name" value="KIR31CHANNEL"/>
</dbReference>
<dbReference type="PRINTS" id="PR01320">
    <property type="entry name" value="KIRCHANNEL"/>
</dbReference>
<dbReference type="SUPFAM" id="SSF81296">
    <property type="entry name" value="E set domains"/>
    <property type="match status" value="1"/>
</dbReference>
<dbReference type="SUPFAM" id="SSF81324">
    <property type="entry name" value="Voltage-gated potassium channels"/>
    <property type="match status" value="1"/>
</dbReference>
<sequence>MSALRRKFGDDYQVVTTSSSGSGLQPQGPGQGPQQQLVPKKKRQRFVDKNGRCNVQHGNLGSETSRYLSDLFTTLVDLKWRWNLFIFILTYTVAWLFMASMWWVIAYTRGDLNKAHVGNYTPCVANVYNFPSAFLFFIETEATIGYGYRYITDKCPEGIILFLFQSILGSIVDAFLIGCMFIKMSQPKKRAETLMFSEHAVISMRDGKLTLMFRVGNLRNSHMVSAQIRCKLLKSRQTPEGEFLPLDQLELDVGFSTGADQLFLVSPLTICHVIDAKSPFYDLSQRSMQTEQFEVVVILEGIVETTGMTCQARTSYTEDEVLWGHRFFPVISLEEGFFKVDYSQFHATFEVPTPPYSVKEQEEMLLMSSPLIAPAITNSKERHNSVECLDGLDDISTKLPSKLQKITGREDFPKKLLRMSSTTSEKAYSLGDLPMKLQRISSVPGNSEEKLVSKTTKMLSDPMSQSVADLPPKLQKMAGGPTRMEGNLPAKLRKMNSDRFT</sequence>
<comment type="function">
    <text evidence="6 7 8 9 10">Inward rectifier potassium channels are characterized by a greater tendency to allow potassium to flow into the cell rather than out of it. Their voltage dependence is regulated by the concentration of extracellular potassium; as external potassium is raised, the voltage range of the channel opening shifts to more positive voltages. The inward rectification is mainly due to the blockage of outward current by internal magnesium. This potassium channel is controlled by G proteins (PubMed:8234283, PubMed:8355805, PubMed:9486652). This receptor plays a crucial role in regulating the heartbeat (PubMed:8234283). Forms a functional channel in association with KCNJ9/GIRK3 (PubMed:8670306).</text>
</comment>
<comment type="catalytic activity">
    <reaction evidence="6 7">
        <text>K(+)(in) = K(+)(out)</text>
        <dbReference type="Rhea" id="RHEA:29463"/>
        <dbReference type="ChEBI" id="CHEBI:29103"/>
    </reaction>
</comment>
<comment type="activity regulation">
    <text evidence="9">Heteromultimer composed of KCNJ3/GIRK1 and KCNJ5/GIRK4 is activated by phosphatidylinositol 4,5 biphosphate (PtdIns(4,5)P2).</text>
</comment>
<comment type="subunit">
    <text evidence="2 3 8">Associates with KCNJ5/GIRK4 or KCNJ6/GIRK2 to form a G-protein activated heteromultimer pore-forming unit. The resulting inward current is much larger (By similarity). Associates with KCNJ9/GIRK3 to form a G-protein activated heteromultimer pore-forming unit (PubMed:8670306).</text>
</comment>
<comment type="interaction">
    <interactant intactId="EBI-7250981">
        <id>P63251</id>
    </interactant>
    <interactant intactId="EBI-7251007">
        <id>P00517</id>
        <label>PRKACA</label>
    </interactant>
    <organismsDiffer>true</organismsDiffer>
    <experiments>6</experiments>
</comment>
<comment type="subcellular location">
    <subcellularLocation>
        <location evidence="4">Membrane</location>
        <topology evidence="4">Multi-pass membrane protein</topology>
    </subcellularLocation>
</comment>
<comment type="similarity">
    <text evidence="11">Belongs to the inward rectifier-type potassium channel (TC 1.A.2.1) family. KCNJ3 subfamily.</text>
</comment>
<feature type="chain" id="PRO_0000154940" description="G protein-activated inward rectifier potassium channel 1">
    <location>
        <begin position="1"/>
        <end position="501"/>
    </location>
</feature>
<feature type="topological domain" description="Cytoplasmic">
    <location>
        <begin position="1"/>
        <end position="80"/>
    </location>
</feature>
<feature type="transmembrane region" description="Helical; Name=M1" evidence="1">
    <location>
        <begin position="81"/>
        <end position="105"/>
    </location>
</feature>
<feature type="topological domain" description="Extracellular" evidence="1">
    <location>
        <begin position="106"/>
        <end position="129"/>
    </location>
</feature>
<feature type="intramembrane region" description="Helical; Pore-forming; Name=H5" evidence="1">
    <location>
        <begin position="130"/>
        <end position="141"/>
    </location>
</feature>
<feature type="intramembrane region" description="Pore-forming" evidence="1">
    <location>
        <begin position="142"/>
        <end position="148"/>
    </location>
</feature>
<feature type="topological domain" description="Extracellular" evidence="1">
    <location>
        <begin position="149"/>
        <end position="157"/>
    </location>
</feature>
<feature type="transmembrane region" description="Helical; Name=M2" evidence="1">
    <location>
        <begin position="158"/>
        <end position="179"/>
    </location>
</feature>
<feature type="topological domain" description="Cytoplasmic">
    <location>
        <begin position="180"/>
        <end position="501"/>
    </location>
</feature>
<feature type="region of interest" description="Disordered" evidence="5">
    <location>
        <begin position="1"/>
        <end position="40"/>
    </location>
</feature>
<feature type="region of interest" description="Polyphosphoinositide (PIP2)-binding" evidence="9">
    <location>
        <begin position="182"/>
        <end position="209"/>
    </location>
</feature>
<feature type="region of interest" description="Disordered" evidence="5">
    <location>
        <begin position="456"/>
        <end position="501"/>
    </location>
</feature>
<feature type="short sequence motif" description="Selectivity filter" evidence="1">
    <location>
        <begin position="143"/>
        <end position="148"/>
    </location>
</feature>
<feature type="compositionally biased region" description="Low complexity" evidence="5">
    <location>
        <begin position="18"/>
        <end position="37"/>
    </location>
</feature>
<feature type="compositionally biased region" description="Polar residues" evidence="5">
    <location>
        <begin position="456"/>
        <end position="467"/>
    </location>
</feature>
<feature type="site" description="Role in the control of polyamine-mediated channel gating and in the blocking by intracellular magnesium" evidence="1">
    <location>
        <position position="173"/>
    </location>
</feature>
<feature type="modified residue" description="Phosphoserine" evidence="3">
    <location>
        <position position="385"/>
    </location>
</feature>
<feature type="modified residue" description="Phosphoserine" evidence="3">
    <location>
        <position position="424"/>
    </location>
</feature>
<feature type="glycosylation site" description="N-linked (GlcNAc...) asparagine" evidence="4">
    <location>
        <position position="119"/>
    </location>
</feature>
<feature type="strand" evidence="12">
    <location>
        <begin position="200"/>
        <end position="203"/>
    </location>
</feature>
<feature type="strand" evidence="12">
    <location>
        <begin position="208"/>
        <end position="211"/>
    </location>
</feature>
<feature type="strand" evidence="12">
    <location>
        <begin position="213"/>
        <end position="215"/>
    </location>
</feature>
<feature type="strand" evidence="12">
    <location>
        <begin position="219"/>
        <end position="221"/>
    </location>
</feature>
<feature type="strand" evidence="12">
    <location>
        <begin position="224"/>
        <end position="237"/>
    </location>
</feature>
<feature type="strand" evidence="12">
    <location>
        <begin position="243"/>
        <end position="250"/>
    </location>
</feature>
<feature type="turn" evidence="12">
    <location>
        <begin position="255"/>
        <end position="257"/>
    </location>
</feature>
<feature type="strand" evidence="12">
    <location>
        <begin position="261"/>
        <end position="263"/>
    </location>
</feature>
<feature type="strand" evidence="12">
    <location>
        <begin position="268"/>
        <end position="273"/>
    </location>
</feature>
<feature type="turn" evidence="12">
    <location>
        <begin position="279"/>
        <end position="282"/>
    </location>
</feature>
<feature type="strand" evidence="12">
    <location>
        <begin position="294"/>
        <end position="303"/>
    </location>
</feature>
<feature type="turn" evidence="12">
    <location>
        <begin position="304"/>
        <end position="306"/>
    </location>
</feature>
<feature type="strand" evidence="12">
    <location>
        <begin position="312"/>
        <end position="317"/>
    </location>
</feature>
<feature type="helix" evidence="12">
    <location>
        <begin position="318"/>
        <end position="320"/>
    </location>
</feature>
<feature type="strand" evidence="12">
    <location>
        <begin position="321"/>
        <end position="323"/>
    </location>
</feature>
<feature type="strand" evidence="12">
    <location>
        <begin position="325"/>
        <end position="327"/>
    </location>
</feature>
<feature type="strand" evidence="12">
    <location>
        <begin position="331"/>
        <end position="336"/>
    </location>
</feature>
<feature type="strand" evidence="12">
    <location>
        <begin position="338"/>
        <end position="340"/>
    </location>
</feature>
<feature type="helix" evidence="12">
    <location>
        <begin position="342"/>
        <end position="344"/>
    </location>
</feature>
<feature type="strand" evidence="12">
    <location>
        <begin position="348"/>
        <end position="350"/>
    </location>
</feature>
<feature type="helix" evidence="12">
    <location>
        <begin position="358"/>
        <end position="363"/>
    </location>
</feature>
<name>KCNJ3_RAT</name>
<accession>P63251</accession>
<accession>P35562</accession>
<keyword id="KW-0002">3D-structure</keyword>
<keyword id="KW-0325">Glycoprotein</keyword>
<keyword id="KW-0407">Ion channel</keyword>
<keyword id="KW-0406">Ion transport</keyword>
<keyword id="KW-0472">Membrane</keyword>
<keyword id="KW-0597">Phosphoprotein</keyword>
<keyword id="KW-0630">Potassium</keyword>
<keyword id="KW-0633">Potassium transport</keyword>
<keyword id="KW-1185">Reference proteome</keyword>
<keyword id="KW-0812">Transmembrane</keyword>
<keyword id="KW-1133">Transmembrane helix</keyword>
<keyword id="KW-0813">Transport</keyword>
<keyword id="KW-0851">Voltage-gated channel</keyword>
<gene>
    <name type="primary">Kcnj3</name>
    <name type="synonym">Girk1</name>
    <name type="synonym">Kga</name>
</gene>
<organism>
    <name type="scientific">Rattus norvegicus</name>
    <name type="common">Rat</name>
    <dbReference type="NCBI Taxonomy" id="10116"/>
    <lineage>
        <taxon>Eukaryota</taxon>
        <taxon>Metazoa</taxon>
        <taxon>Chordata</taxon>
        <taxon>Craniata</taxon>
        <taxon>Vertebrata</taxon>
        <taxon>Euteleostomi</taxon>
        <taxon>Mammalia</taxon>
        <taxon>Eutheria</taxon>
        <taxon>Euarchontoglires</taxon>
        <taxon>Glires</taxon>
        <taxon>Rodentia</taxon>
        <taxon>Myomorpha</taxon>
        <taxon>Muroidea</taxon>
        <taxon>Muridae</taxon>
        <taxon>Murinae</taxon>
        <taxon>Rattus</taxon>
    </lineage>
</organism>
<reference key="1">
    <citation type="journal article" date="1993" name="Proc. Natl. Acad. Sci. U.S.A.">
        <title>Atrial G protein-activated K+ channel: expression cloning and molecular properties.</title>
        <authorList>
            <person name="Dascal N."/>
            <person name="Schreibmayer W."/>
            <person name="Lim N.F."/>
            <person name="Wang W."/>
            <person name="Chavkin C."/>
            <person name="Dimagno L."/>
            <person name="Labarca C."/>
            <person name="Kieffer B.L."/>
            <person name="Gaveriaux-Ruff C."/>
            <person name="Trollinger D."/>
            <person name="Lester H.A."/>
            <person name="Davidson N."/>
        </authorList>
    </citation>
    <scope>NUCLEOTIDE SEQUENCE [MRNA]</scope>
    <scope>FUNCTION</scope>
    <scope>TRANSPORTER ACTIVITY</scope>
    <source>
        <tissue>Brain</tissue>
        <tissue>Heart atrium</tissue>
    </source>
</reference>
<reference key="2">
    <citation type="journal article" date="1993" name="Nature">
        <title>Primary structure and functional expression of a rat G-protein-coupled muscarinic potassium channel.</title>
        <authorList>
            <person name="Kubo Y."/>
            <person name="Reuveny E."/>
            <person name="Slesinger P.A."/>
            <person name="Jan Y.N."/>
            <person name="Jan L.Y."/>
        </authorList>
    </citation>
    <scope>NUCLEOTIDE SEQUENCE [MRNA]</scope>
    <scope>FUNCTION</scope>
    <scope>TRANSPORTER ACTIVITY</scope>
</reference>
<reference key="3">
    <citation type="journal article" date="1994" name="Mol. Cell. Neurosci.">
        <title>G protein-activated inwardly rectifying potassium channel (GIRK1/KGA) mRNA in adult rat heart and brain by in situ hybridization histochemistry.</title>
        <authorList>
            <person name="Depaoli A.M."/>
            <person name="Bell G.I."/>
            <person name="Stoffel M."/>
        </authorList>
    </citation>
    <scope>NUCLEOTIDE SEQUENCE [MRNA]</scope>
</reference>
<reference key="4">
    <citation type="journal article" date="1996" name="J. Neurosci.">
        <title>IRK(1-3) and GIRK(1-4) inwardly rectifying K+ channel mRNAs are differentially expressed in the adult rat brain.</title>
        <authorList>
            <person name="Karschin C."/>
            <person name="Dissman E."/>
            <person name="Stuehmer W."/>
            <person name="Karschin A."/>
        </authorList>
    </citation>
    <scope>NUCLEOTIDE SEQUENCE [MRNA]</scope>
    <source>
        <strain>Sprague-Dawley</strain>
        <tissue>Brain</tissue>
    </source>
</reference>
<reference key="5">
    <citation type="journal article" date="1996" name="Biochem. Biophys. Res. Commun.">
        <title>Functional expression and cellular mRNA localization of a G protein-activated K+ inward rectifier isolated from rat brain.</title>
        <authorList>
            <person name="Dissmann E."/>
            <person name="Wischmeyer E."/>
            <person name="Spauschus A."/>
            <person name="Pfeil D.V."/>
            <person name="Karschin C."/>
            <person name="Karschin A."/>
        </authorList>
    </citation>
    <scope>FUNCTION</scope>
    <scope>SUBUNIT</scope>
    <source>
        <tissue>Brain</tissue>
    </source>
</reference>
<reference key="6">
    <citation type="journal article" date="1998" name="Nature">
        <title>Direct activation of inward rectifier potassium channels by PIP2 and its stabilization by Gbetagamma.</title>
        <authorList>
            <person name="Huang C.L."/>
            <person name="Feng S."/>
            <person name="Hilgemann D.W."/>
        </authorList>
    </citation>
    <scope>FUNCTION</scope>
    <scope>ACTIVITY REGULATION</scope>
    <scope>PIP2-BINDING REGION</scope>
</reference>